<name>LDH_BOTBR</name>
<keyword id="KW-0903">Direct protein sequencing</keyword>
<keyword id="KW-0520">NAD</keyword>
<keyword id="KW-0560">Oxidoreductase</keyword>
<comment type="catalytic activity">
    <reaction>
        <text>(S)-lactate + NAD(+) = pyruvate + NADH + H(+)</text>
        <dbReference type="Rhea" id="RHEA:23444"/>
        <dbReference type="ChEBI" id="CHEBI:15361"/>
        <dbReference type="ChEBI" id="CHEBI:15378"/>
        <dbReference type="ChEBI" id="CHEBI:16651"/>
        <dbReference type="ChEBI" id="CHEBI:57540"/>
        <dbReference type="ChEBI" id="CHEBI:57945"/>
        <dbReference type="EC" id="1.1.1.27"/>
    </reaction>
</comment>
<comment type="pathway">
    <text>Fermentation; pyruvate fermentation to lactate; (S)-lactate from pyruvate: step 1/1.</text>
</comment>
<comment type="subunit">
    <text evidence="1">Homotetramer.</text>
</comment>
<comment type="similarity">
    <text evidence="2">Belongs to the LDH/MDH superfamily. LDH family.</text>
</comment>
<comment type="caution">
    <text evidence="3">Was originally (Ref.1) thought to be a malate dehydrogenase or an NADH-dependent acyl-CoA reductase.</text>
</comment>
<reference key="1">
    <citation type="submission" date="1996-12" db="EMBL/GenBank/DDBJ databases">
        <title>Malate dehydrogenase gene from Botryococcus braunii.</title>
        <authorList>
            <person name="Vioque J."/>
            <person name="Sirakova T."/>
            <person name="Kolattukudy P.E."/>
        </authorList>
    </citation>
    <scope>NUCLEOTIDE SEQUENCE [GENOMIC DNA]</scope>
    <source>
        <strain>Race A</strain>
    </source>
</reference>
<reference key="2">
    <citation type="journal article" date="1995" name="FEBS Lett.">
        <title>Solubilization and purification of aldehyde-generating fatty acyl-CoA reductase from green alga Botryococcus braunii.</title>
        <authorList>
            <person name="Wang X."/>
            <person name="Kolattukudy P.E."/>
        </authorList>
    </citation>
    <scope>PROTEIN SEQUENCE OF 2-27</scope>
</reference>
<reference key="3">
    <citation type="journal article" date="2001" name="Genome Res.">
        <title>Massive sequence comparisons as a help in annotating genomic sequences.</title>
        <authorList>
            <person name="Louis A."/>
            <person name="Ollivier E."/>
            <person name="Aude J.-C."/>
            <person name="Risler J.-L."/>
        </authorList>
    </citation>
    <scope>PROBABLE FUNCTION</scope>
</reference>
<feature type="chain" id="PRO_0000168492" description="L-lactate dehydrogenase">
    <location>
        <begin position="1"/>
        <end position="316"/>
    </location>
</feature>
<feature type="active site" description="Proton acceptor" evidence="1">
    <location>
        <position position="172"/>
    </location>
</feature>
<feature type="binding site" evidence="1">
    <location>
        <begin position="34"/>
        <end position="39"/>
    </location>
    <ligand>
        <name>NAD(+)</name>
        <dbReference type="ChEBI" id="CHEBI:57540"/>
    </ligand>
</feature>
<feature type="binding site" evidence="1">
    <location>
        <position position="89"/>
    </location>
    <ligand>
        <name>substrate</name>
    </ligand>
</feature>
<feature type="binding site" evidence="1">
    <location>
        <position position="121"/>
    </location>
    <ligand>
        <name>NAD(+)</name>
        <dbReference type="ChEBI" id="CHEBI:57540"/>
    </ligand>
</feature>
<feature type="binding site" evidence="1">
    <location>
        <position position="121"/>
    </location>
    <ligand>
        <name>substrate</name>
    </ligand>
</feature>
<feature type="binding site" evidence="1">
    <location>
        <position position="152"/>
    </location>
    <ligand>
        <name>substrate</name>
    </ligand>
</feature>
<feature type="sequence conflict" description="In Ref. 2; AA sequence." evidence="2" ref="2">
    <original>Y</original>
    <variation>I</variation>
    <location>
        <position position="6"/>
    </location>
</feature>
<feature type="sequence conflict" description="In Ref. 2; AA sequence." evidence="2" ref="2">
    <original>G</original>
    <variation>W</variation>
    <location>
        <position position="16"/>
    </location>
</feature>
<dbReference type="EC" id="1.1.1.27"/>
<dbReference type="EMBL" id="U80676">
    <property type="protein sequence ID" value="AAB38970.1"/>
    <property type="molecule type" value="Genomic_DNA"/>
</dbReference>
<dbReference type="SMR" id="P93052"/>
<dbReference type="BioCyc" id="MetaCyc:MONOMER-17304"/>
<dbReference type="UniPathway" id="UPA00554">
    <property type="reaction ID" value="UER00611"/>
</dbReference>
<dbReference type="GO" id="GO:0004459">
    <property type="term" value="F:L-lactate dehydrogenase activity"/>
    <property type="evidence" value="ECO:0007669"/>
    <property type="project" value="UniProtKB-EC"/>
</dbReference>
<dbReference type="GO" id="GO:0006089">
    <property type="term" value="P:lactate metabolic process"/>
    <property type="evidence" value="ECO:0007669"/>
    <property type="project" value="TreeGrafter"/>
</dbReference>
<dbReference type="CDD" id="cd01339">
    <property type="entry name" value="LDH-like_MDH"/>
    <property type="match status" value="1"/>
</dbReference>
<dbReference type="FunFam" id="3.40.50.720:FF:000018">
    <property type="entry name" value="Malate dehydrogenase"/>
    <property type="match status" value="1"/>
</dbReference>
<dbReference type="FunFam" id="3.90.110.10:FF:000004">
    <property type="entry name" value="Malate dehydrogenase"/>
    <property type="match status" value="1"/>
</dbReference>
<dbReference type="Gene3D" id="3.90.110.10">
    <property type="entry name" value="Lactate dehydrogenase/glycoside hydrolase, family 4, C-terminal"/>
    <property type="match status" value="1"/>
</dbReference>
<dbReference type="Gene3D" id="3.40.50.720">
    <property type="entry name" value="NAD(P)-binding Rossmann-like Domain"/>
    <property type="match status" value="1"/>
</dbReference>
<dbReference type="HAMAP" id="MF_00487">
    <property type="entry name" value="Malate_dehydrog_3"/>
    <property type="match status" value="1"/>
</dbReference>
<dbReference type="InterPro" id="IPR001557">
    <property type="entry name" value="L-lactate/malate_DH"/>
</dbReference>
<dbReference type="InterPro" id="IPR022383">
    <property type="entry name" value="Lactate/malate_DH_C"/>
</dbReference>
<dbReference type="InterPro" id="IPR001236">
    <property type="entry name" value="Lactate/malate_DH_N"/>
</dbReference>
<dbReference type="InterPro" id="IPR015955">
    <property type="entry name" value="Lactate_DH/Glyco_Ohase_4_C"/>
</dbReference>
<dbReference type="InterPro" id="IPR011275">
    <property type="entry name" value="Malate_DH_type3"/>
</dbReference>
<dbReference type="InterPro" id="IPR036291">
    <property type="entry name" value="NAD(P)-bd_dom_sf"/>
</dbReference>
<dbReference type="NCBIfam" id="TIGR01763">
    <property type="entry name" value="MalateDH_bact"/>
    <property type="match status" value="1"/>
</dbReference>
<dbReference type="NCBIfam" id="NF004863">
    <property type="entry name" value="PRK06223.1"/>
    <property type="match status" value="1"/>
</dbReference>
<dbReference type="PANTHER" id="PTHR43128">
    <property type="entry name" value="L-2-HYDROXYCARBOXYLATE DEHYDROGENASE (NAD(P)(+))"/>
    <property type="match status" value="1"/>
</dbReference>
<dbReference type="PANTHER" id="PTHR43128:SF16">
    <property type="entry name" value="L-LACTATE DEHYDROGENASE"/>
    <property type="match status" value="1"/>
</dbReference>
<dbReference type="Pfam" id="PF02866">
    <property type="entry name" value="Ldh_1_C"/>
    <property type="match status" value="1"/>
</dbReference>
<dbReference type="Pfam" id="PF00056">
    <property type="entry name" value="Ldh_1_N"/>
    <property type="match status" value="1"/>
</dbReference>
<dbReference type="PIRSF" id="PIRSF000102">
    <property type="entry name" value="Lac_mal_DH"/>
    <property type="match status" value="1"/>
</dbReference>
<dbReference type="PRINTS" id="PR00086">
    <property type="entry name" value="LLDHDRGNASE"/>
</dbReference>
<dbReference type="SUPFAM" id="SSF56327">
    <property type="entry name" value="LDH C-terminal domain-like"/>
    <property type="match status" value="1"/>
</dbReference>
<dbReference type="SUPFAM" id="SSF51735">
    <property type="entry name" value="NAD(P)-binding Rossmann-fold domains"/>
    <property type="match status" value="1"/>
</dbReference>
<sequence>MARKKYALIGAGNIGGTLAHLAALKGLGDIVLFDVVEGVPQGKALDLSQCGPVEGFDANIKGSNDYADIAGADVIIVTAGVARKPGMSRDDLLGINLKVMKAVGEGIRDNAPDAFVICITNPLDAMVWALREFSGLPANKVVGMAGVLDSGRFSHFLAEEFGVSVNSVLGGHGDNMVPVLEYSTVSGIPVSELIEMGFSTKEKVDEIIKRTRGGGGEIVALLKTGSAYYAPATSGIAMAEAYLYDQKRILPAAAHLSGEYGIDNLYVGVPVVIGANGVEKVVEVKLSDEAKANLQVSVDAVKELLVACKGIDESLA</sequence>
<evidence type="ECO:0000250" key="1"/>
<evidence type="ECO:0000305" key="2"/>
<evidence type="ECO:0000305" key="3">
    <source>
    </source>
</evidence>
<proteinExistence type="evidence at protein level"/>
<protein>
    <recommendedName>
        <fullName>L-lactate dehydrogenase</fullName>
        <shortName>LDH</shortName>
        <ecNumber>1.1.1.27</ecNumber>
    </recommendedName>
</protein>
<organism>
    <name type="scientific">Botryococcus braunii</name>
    <name type="common">Green alga</name>
    <dbReference type="NCBI Taxonomy" id="38881"/>
    <lineage>
        <taxon>Eukaryota</taxon>
        <taxon>Viridiplantae</taxon>
        <taxon>Chlorophyta</taxon>
        <taxon>core chlorophytes</taxon>
        <taxon>Trebouxiophyceae</taxon>
        <taxon>Trebouxiophyceae incertae sedis</taxon>
        <taxon>Elliptochloris clade</taxon>
        <taxon>Botryococcus</taxon>
    </lineage>
</organism>
<accession>P93052</accession>
<accession>Q7M1E9</accession>